<proteinExistence type="inferred from homology"/>
<evidence type="ECO:0000255" key="1">
    <source>
        <dbReference type="HAMAP-Rule" id="MF_00004"/>
    </source>
</evidence>
<evidence type="ECO:0000305" key="2"/>
<comment type="function">
    <text evidence="1">Catalyzes a salvage reaction resulting in the formation of AMP, that is energically less costly than de novo synthesis.</text>
</comment>
<comment type="catalytic activity">
    <reaction evidence="1">
        <text>AMP + diphosphate = 5-phospho-alpha-D-ribose 1-diphosphate + adenine</text>
        <dbReference type="Rhea" id="RHEA:16609"/>
        <dbReference type="ChEBI" id="CHEBI:16708"/>
        <dbReference type="ChEBI" id="CHEBI:33019"/>
        <dbReference type="ChEBI" id="CHEBI:58017"/>
        <dbReference type="ChEBI" id="CHEBI:456215"/>
        <dbReference type="EC" id="2.4.2.7"/>
    </reaction>
</comment>
<comment type="pathway">
    <text evidence="1">Purine metabolism; AMP biosynthesis via salvage pathway; AMP from adenine: step 1/1.</text>
</comment>
<comment type="subunit">
    <text evidence="1">Homodimer.</text>
</comment>
<comment type="subcellular location">
    <subcellularLocation>
        <location evidence="1">Cytoplasm</location>
    </subcellularLocation>
</comment>
<comment type="similarity">
    <text evidence="1">Belongs to the purine/pyrimidine phosphoribosyltransferase family.</text>
</comment>
<comment type="sequence caution" evidence="2">
    <conflict type="erroneous initiation">
        <sequence resource="EMBL-CDS" id="ABM78146"/>
    </conflict>
</comment>
<keyword id="KW-0963">Cytoplasm</keyword>
<keyword id="KW-0328">Glycosyltransferase</keyword>
<keyword id="KW-0660">Purine salvage</keyword>
<keyword id="KW-0808">Transferase</keyword>
<feature type="chain" id="PRO_0000321383" description="Adenine phosphoribosyltransferase">
    <location>
        <begin position="1"/>
        <end position="172"/>
    </location>
</feature>
<protein>
    <recommendedName>
        <fullName evidence="1">Adenine phosphoribosyltransferase</fullName>
        <shortName evidence="1">APRT</shortName>
        <ecNumber evidence="1">2.4.2.7</ecNumber>
    </recommendedName>
</protein>
<dbReference type="EC" id="2.4.2.7" evidence="1"/>
<dbReference type="EMBL" id="CP000554">
    <property type="protein sequence ID" value="ABM78146.1"/>
    <property type="status" value="ALT_INIT"/>
    <property type="molecule type" value="Genomic_DNA"/>
</dbReference>
<dbReference type="RefSeq" id="WP_041375125.1">
    <property type="nucleotide sequence ID" value="NC_008820.1"/>
</dbReference>
<dbReference type="SMR" id="A2C9I6"/>
<dbReference type="STRING" id="59922.P9303_13991"/>
<dbReference type="KEGG" id="pmf:P9303_13991"/>
<dbReference type="HOGENOM" id="CLU_063339_3_0_3"/>
<dbReference type="BioCyc" id="PMAR59922:G1G80-1206-MONOMER"/>
<dbReference type="UniPathway" id="UPA00588">
    <property type="reaction ID" value="UER00646"/>
</dbReference>
<dbReference type="Proteomes" id="UP000002274">
    <property type="component" value="Chromosome"/>
</dbReference>
<dbReference type="GO" id="GO:0005737">
    <property type="term" value="C:cytoplasm"/>
    <property type="evidence" value="ECO:0007669"/>
    <property type="project" value="UniProtKB-SubCell"/>
</dbReference>
<dbReference type="GO" id="GO:0002055">
    <property type="term" value="F:adenine binding"/>
    <property type="evidence" value="ECO:0007669"/>
    <property type="project" value="TreeGrafter"/>
</dbReference>
<dbReference type="GO" id="GO:0003999">
    <property type="term" value="F:adenine phosphoribosyltransferase activity"/>
    <property type="evidence" value="ECO:0007669"/>
    <property type="project" value="UniProtKB-UniRule"/>
</dbReference>
<dbReference type="GO" id="GO:0016208">
    <property type="term" value="F:AMP binding"/>
    <property type="evidence" value="ECO:0007669"/>
    <property type="project" value="TreeGrafter"/>
</dbReference>
<dbReference type="GO" id="GO:0006168">
    <property type="term" value="P:adenine salvage"/>
    <property type="evidence" value="ECO:0007669"/>
    <property type="project" value="InterPro"/>
</dbReference>
<dbReference type="GO" id="GO:0044209">
    <property type="term" value="P:AMP salvage"/>
    <property type="evidence" value="ECO:0007669"/>
    <property type="project" value="UniProtKB-UniRule"/>
</dbReference>
<dbReference type="GO" id="GO:0006166">
    <property type="term" value="P:purine ribonucleoside salvage"/>
    <property type="evidence" value="ECO:0007669"/>
    <property type="project" value="UniProtKB-KW"/>
</dbReference>
<dbReference type="CDD" id="cd06223">
    <property type="entry name" value="PRTases_typeI"/>
    <property type="match status" value="1"/>
</dbReference>
<dbReference type="FunFam" id="3.40.50.2020:FF:000021">
    <property type="entry name" value="Adenine phosphoribosyltransferase"/>
    <property type="match status" value="1"/>
</dbReference>
<dbReference type="Gene3D" id="3.40.50.2020">
    <property type="match status" value="1"/>
</dbReference>
<dbReference type="HAMAP" id="MF_00004">
    <property type="entry name" value="Aden_phosphoribosyltr"/>
    <property type="match status" value="1"/>
</dbReference>
<dbReference type="InterPro" id="IPR005764">
    <property type="entry name" value="Ade_phspho_trans"/>
</dbReference>
<dbReference type="InterPro" id="IPR000836">
    <property type="entry name" value="PRibTrfase_dom"/>
</dbReference>
<dbReference type="InterPro" id="IPR029057">
    <property type="entry name" value="PRTase-like"/>
</dbReference>
<dbReference type="InterPro" id="IPR050054">
    <property type="entry name" value="UPRTase/APRTase"/>
</dbReference>
<dbReference type="NCBIfam" id="TIGR01090">
    <property type="entry name" value="apt"/>
    <property type="match status" value="1"/>
</dbReference>
<dbReference type="NCBIfam" id="NF002634">
    <property type="entry name" value="PRK02304.1-3"/>
    <property type="match status" value="1"/>
</dbReference>
<dbReference type="NCBIfam" id="NF002636">
    <property type="entry name" value="PRK02304.1-5"/>
    <property type="match status" value="1"/>
</dbReference>
<dbReference type="PANTHER" id="PTHR32315">
    <property type="entry name" value="ADENINE PHOSPHORIBOSYLTRANSFERASE"/>
    <property type="match status" value="1"/>
</dbReference>
<dbReference type="PANTHER" id="PTHR32315:SF3">
    <property type="entry name" value="ADENINE PHOSPHORIBOSYLTRANSFERASE"/>
    <property type="match status" value="1"/>
</dbReference>
<dbReference type="Pfam" id="PF00156">
    <property type="entry name" value="Pribosyltran"/>
    <property type="match status" value="1"/>
</dbReference>
<dbReference type="SUPFAM" id="SSF53271">
    <property type="entry name" value="PRTase-like"/>
    <property type="match status" value="1"/>
</dbReference>
<dbReference type="PROSITE" id="PS00103">
    <property type="entry name" value="PUR_PYR_PR_TRANSFER"/>
    <property type="match status" value="1"/>
</dbReference>
<reference key="1">
    <citation type="journal article" date="2007" name="PLoS Genet.">
        <title>Patterns and implications of gene gain and loss in the evolution of Prochlorococcus.</title>
        <authorList>
            <person name="Kettler G.C."/>
            <person name="Martiny A.C."/>
            <person name="Huang K."/>
            <person name="Zucker J."/>
            <person name="Coleman M.L."/>
            <person name="Rodrigue S."/>
            <person name="Chen F."/>
            <person name="Lapidus A."/>
            <person name="Ferriera S."/>
            <person name="Johnson J."/>
            <person name="Steglich C."/>
            <person name="Church G.M."/>
            <person name="Richardson P."/>
            <person name="Chisholm S.W."/>
        </authorList>
    </citation>
    <scope>NUCLEOTIDE SEQUENCE [LARGE SCALE GENOMIC DNA]</scope>
    <source>
        <strain>MIT 9303</strain>
    </source>
</reference>
<name>APT_PROM3</name>
<accession>A2C9I6</accession>
<sequence length="172" mass="18611">MDLRHLIQDIPDFPKPGILFRDISPLLRDPDGWGEVMRQLGDLCTEFKPDLIVGIESRGFIVGTALATNRKIGFVPVRKPGKLPGDVLGIDYSLEYGSDRLEIHADALQGHPRVLMVDDLLATGGTAKATVELIEQAGGDLVGCGFVIELAALGGRQQLPVEIPVKSLIIYS</sequence>
<organism>
    <name type="scientific">Prochlorococcus marinus (strain MIT 9303)</name>
    <dbReference type="NCBI Taxonomy" id="59922"/>
    <lineage>
        <taxon>Bacteria</taxon>
        <taxon>Bacillati</taxon>
        <taxon>Cyanobacteriota</taxon>
        <taxon>Cyanophyceae</taxon>
        <taxon>Synechococcales</taxon>
        <taxon>Prochlorococcaceae</taxon>
        <taxon>Prochlorococcus</taxon>
    </lineage>
</organism>
<gene>
    <name evidence="1" type="primary">apt</name>
    <name type="ordered locus">P9303_13991</name>
</gene>